<evidence type="ECO:0000250" key="1"/>
<evidence type="ECO:0000255" key="2">
    <source>
        <dbReference type="PROSITE-ProRule" id="PRU10001"/>
    </source>
</evidence>
<evidence type="ECO:0000269" key="3">
    <source>
    </source>
</evidence>
<evidence type="ECO:0000269" key="4">
    <source ref="4"/>
</evidence>
<evidence type="ECO:0000305" key="5"/>
<organism>
    <name type="scientific">Drosophila willistoni</name>
    <name type="common">Fruit fly</name>
    <dbReference type="NCBI Taxonomy" id="7260"/>
    <lineage>
        <taxon>Eukaryota</taxon>
        <taxon>Metazoa</taxon>
        <taxon>Ecdysozoa</taxon>
        <taxon>Arthropoda</taxon>
        <taxon>Hexapoda</taxon>
        <taxon>Insecta</taxon>
        <taxon>Pterygota</taxon>
        <taxon>Neoptera</taxon>
        <taxon>Endopterygota</taxon>
        <taxon>Diptera</taxon>
        <taxon>Brachycera</taxon>
        <taxon>Muscomorpha</taxon>
        <taxon>Ephydroidea</taxon>
        <taxon>Drosophilidae</taxon>
        <taxon>Drosophila</taxon>
        <taxon>Sophophora</taxon>
    </lineage>
</organism>
<protein>
    <recommendedName>
        <fullName>Alcohol dehydrogenase</fullName>
        <ecNumber>1.1.1.1</ecNumber>
    </recommendedName>
</protein>
<accession>Q05114</accession>
<accession>B4MZ46</accession>
<accession>Q9NG34</accession>
<accession>Q9TVL4</accession>
<accession>Q9TW33</accession>
<accession>Q9TY28</accession>
<accession>Q9TY29</accession>
<accession>Q9TY30</accession>
<accession>Q9TY31</accession>
<gene>
    <name type="primary">Adh</name>
    <name type="ORF">GK18290</name>
</gene>
<proteinExistence type="inferred from homology"/>
<reference key="1">
    <citation type="journal article" date="1993" name="Mol. Biol. Evol.">
        <title>Evolution of the Adh locus in the Drosophila willistoni group: the loss of an intron, and shift in codon usage.</title>
        <authorList>
            <person name="Anderson C.L."/>
            <person name="Carew E."/>
            <person name="Powell J.R."/>
        </authorList>
    </citation>
    <scope>NUCLEOTIDE SEQUENCE [GENOMIC DNA]</scope>
    <source>
        <strain>W4L</strain>
    </source>
</reference>
<reference key="2">
    <citation type="submission" date="1996-03" db="EMBL/GenBank/DDBJ databases">
        <authorList>
            <person name="Powell J.R."/>
        </authorList>
    </citation>
    <scope>SEQUENCE REVISION</scope>
</reference>
<reference key="3">
    <citation type="journal article" date="1997" name="J. Mol. Evol.">
        <title>Adh nucleotide variation in Drosophila willistoni: high replacement polymorphism in an electrophoretically monomorphic protein.</title>
        <authorList>
            <person name="Griffith E.C."/>
            <person name="Powell J.R."/>
        </authorList>
    </citation>
    <scope>NUCLEOTIDE SEQUENCE [GENOMIC DNA]</scope>
    <scope>VARIANTS ILE-57; ALA-77; PRO-138; PRO-194; ALA-213 AND THR-225</scope>
    <source>
        <strain>0811.0</strain>
        <strain>0811.4</strain>
        <strain>A57</strain>
        <strain>Atlixco</strain>
        <strain>Belize II</strain>
        <strain>Belize VI</strain>
        <strain>Cano Mora</strain>
        <strain>Guana</strain>
        <strain>Lima</strain>
        <strain>Manaus I</strain>
        <strain>Manaus II</strain>
        <strain>Manaus III</strain>
        <strain>Manaus IV</strain>
        <strain>PA1</strain>
        <strain>PA2</strain>
        <strain>PA3</strain>
        <strain>W3L</strain>
    </source>
</reference>
<reference key="4">
    <citation type="journal article" date="1998" name="Evolution">
        <title>A molecular phylogeny of the Drosophila willistoni group: conflicts between species concepts?</title>
        <authorList>
            <person name="Gleason J.M."/>
            <person name="Griffith E.C."/>
            <person name="Powell J.R."/>
        </authorList>
        <dbReference type="AGRICOLA" id="IND21806050"/>
    </citation>
    <scope>NUCLEOTIDE SEQUENCE [GENOMIC DNA]</scope>
    <scope>VARIANTS ILE-57; ALA-77; PRO-138; PRO-194; ALA-213 AND THR-225</scope>
    <source>
        <strain>0811.0</strain>
        <strain>0811.4</strain>
        <strain>A57</strain>
        <strain>Atlixco</strain>
        <strain>Belize II</strain>
        <strain>Belize VI</strain>
        <strain>Cano Mora</strain>
        <strain>Guana</strain>
        <strain>Lima</strain>
        <strain>Manaus I</strain>
        <strain>Manaus II</strain>
        <strain>Manaus III</strain>
        <strain>Manaus IV</strain>
        <strain>PA1</strain>
        <strain>PA2</strain>
        <strain>PA3</strain>
        <strain>W3L</strain>
    </source>
</reference>
<reference key="5">
    <citation type="journal article" date="2007" name="Nature">
        <title>Evolution of genes and genomes on the Drosophila phylogeny.</title>
        <authorList>
            <consortium name="Drosophila 12 genomes consortium"/>
        </authorList>
    </citation>
    <scope>NUCLEOTIDE SEQUENCE [LARGE SCALE GENOMIC DNA]</scope>
    <source>
        <strain>Tucson 14030-0811.24</strain>
    </source>
</reference>
<reference key="6">
    <citation type="thesis" date="2000" institute="University of Arizona / Tucson" country="United States">
        <title>Phylogenetic relationships of flies in family Drosophilidae inferred by combined analysis of morphological and molecular characters.</title>
        <authorList>
            <person name="O'Grady P.M."/>
        </authorList>
    </citation>
    <scope>NUCLEOTIDE SEQUENCE [GENOMIC DNA] OF 32-166</scope>
</reference>
<dbReference type="EC" id="1.1.1.1"/>
<dbReference type="EMBL" id="L08648">
    <property type="protein sequence ID" value="AAA91100.1"/>
    <property type="molecule type" value="Genomic_DNA"/>
</dbReference>
<dbReference type="EMBL" id="U95251">
    <property type="protein sequence ID" value="AAD00777.1"/>
    <property type="molecule type" value="Genomic_DNA"/>
</dbReference>
<dbReference type="EMBL" id="U95252">
    <property type="protein sequence ID" value="AAD00778.1"/>
    <property type="molecule type" value="Genomic_DNA"/>
</dbReference>
<dbReference type="EMBL" id="U95253">
    <property type="protein sequence ID" value="AAD00779.1"/>
    <property type="molecule type" value="Genomic_DNA"/>
</dbReference>
<dbReference type="EMBL" id="U95254">
    <property type="protein sequence ID" value="AAD00780.1"/>
    <property type="molecule type" value="Genomic_DNA"/>
</dbReference>
<dbReference type="EMBL" id="U95255">
    <property type="protein sequence ID" value="AAD00781.1"/>
    <property type="molecule type" value="Genomic_DNA"/>
</dbReference>
<dbReference type="EMBL" id="U95256">
    <property type="protein sequence ID" value="AAD00782.1"/>
    <property type="molecule type" value="Genomic_DNA"/>
</dbReference>
<dbReference type="EMBL" id="U95257">
    <property type="protein sequence ID" value="AAD00783.1"/>
    <property type="molecule type" value="Genomic_DNA"/>
</dbReference>
<dbReference type="EMBL" id="U95258">
    <property type="protein sequence ID" value="AAD00784.1"/>
    <property type="molecule type" value="Genomic_DNA"/>
</dbReference>
<dbReference type="EMBL" id="U95259">
    <property type="protein sequence ID" value="AAD00785.1"/>
    <property type="molecule type" value="Genomic_DNA"/>
</dbReference>
<dbReference type="EMBL" id="U95260">
    <property type="protein sequence ID" value="AAD00786.1"/>
    <property type="molecule type" value="Genomic_DNA"/>
</dbReference>
<dbReference type="EMBL" id="U95261">
    <property type="protein sequence ID" value="AAD00787.1"/>
    <property type="molecule type" value="Genomic_DNA"/>
</dbReference>
<dbReference type="EMBL" id="U95262">
    <property type="protein sequence ID" value="AAD00788.1"/>
    <property type="molecule type" value="Genomic_DNA"/>
</dbReference>
<dbReference type="EMBL" id="U95263">
    <property type="protein sequence ID" value="AAD00789.1"/>
    <property type="molecule type" value="Genomic_DNA"/>
</dbReference>
<dbReference type="EMBL" id="U95264">
    <property type="protein sequence ID" value="AAD00790.1"/>
    <property type="molecule type" value="Genomic_DNA"/>
</dbReference>
<dbReference type="EMBL" id="U95265">
    <property type="protein sequence ID" value="AAD00791.1"/>
    <property type="molecule type" value="Genomic_DNA"/>
</dbReference>
<dbReference type="EMBL" id="U95266">
    <property type="protein sequence ID" value="AAD00792.1"/>
    <property type="molecule type" value="Genomic_DNA"/>
</dbReference>
<dbReference type="EMBL" id="U95267">
    <property type="protein sequence ID" value="AAD00793.1"/>
    <property type="molecule type" value="Genomic_DNA"/>
</dbReference>
<dbReference type="EMBL" id="CH963913">
    <property type="protein sequence ID" value="EDW77442.1"/>
    <property type="molecule type" value="Genomic_DNA"/>
</dbReference>
<dbReference type="EMBL" id="AF264082">
    <property type="protein sequence ID" value="AAF72724.1"/>
    <property type="molecule type" value="Genomic_DNA"/>
</dbReference>
<dbReference type="RefSeq" id="XP_002066456.1">
    <property type="nucleotide sequence ID" value="XM_002066420.2"/>
</dbReference>
<dbReference type="SMR" id="Q05114"/>
<dbReference type="STRING" id="7260.Q05114"/>
<dbReference type="EnsemblMetazoa" id="FBtr0248941">
    <property type="protein sequence ID" value="FBpp0247433"/>
    <property type="gene ID" value="FBgn0013152"/>
</dbReference>
<dbReference type="EnsemblMetazoa" id="FBtr0417483">
    <property type="protein sequence ID" value="FBpp0375647"/>
    <property type="gene ID" value="FBgn0013152"/>
</dbReference>
<dbReference type="EnsemblMetazoa" id="XM_015178175.3">
    <property type="protein sequence ID" value="XP_015033661.1"/>
    <property type="gene ID" value="LOC6643501"/>
</dbReference>
<dbReference type="GeneID" id="6643501"/>
<dbReference type="KEGG" id="dwi:6643501"/>
<dbReference type="eggNOG" id="KOG4169">
    <property type="taxonomic scope" value="Eukaryota"/>
</dbReference>
<dbReference type="HOGENOM" id="CLU_010194_2_16_1"/>
<dbReference type="OMA" id="WSKHWDS"/>
<dbReference type="OrthoDB" id="417891at2759"/>
<dbReference type="PhylomeDB" id="Q05114"/>
<dbReference type="ChiTaRS" id="Adh">
    <property type="organism name" value="fly"/>
</dbReference>
<dbReference type="Proteomes" id="UP000007798">
    <property type="component" value="Unassembled WGS sequence"/>
</dbReference>
<dbReference type="GO" id="GO:0005829">
    <property type="term" value="C:cytosol"/>
    <property type="evidence" value="ECO:0007669"/>
    <property type="project" value="EnsemblMetazoa"/>
</dbReference>
<dbReference type="GO" id="GO:0004022">
    <property type="term" value="F:alcohol dehydrogenase (NAD+) activity"/>
    <property type="evidence" value="ECO:0007669"/>
    <property type="project" value="UniProtKB-EC"/>
</dbReference>
<dbReference type="GO" id="GO:0004029">
    <property type="term" value="F:aldehyde dehydrogenase (NAD+) activity"/>
    <property type="evidence" value="ECO:0007669"/>
    <property type="project" value="EnsemblMetazoa"/>
</dbReference>
<dbReference type="GO" id="GO:0042803">
    <property type="term" value="F:protein homodimerization activity"/>
    <property type="evidence" value="ECO:0007669"/>
    <property type="project" value="EnsemblMetazoa"/>
</dbReference>
<dbReference type="GO" id="GO:0006117">
    <property type="term" value="P:acetaldehyde metabolic process"/>
    <property type="evidence" value="ECO:0007669"/>
    <property type="project" value="EnsemblMetazoa"/>
</dbReference>
<dbReference type="GO" id="GO:0019431">
    <property type="term" value="P:acetyl-CoA biosynthetic process from ethanol"/>
    <property type="evidence" value="ECO:0007669"/>
    <property type="project" value="EnsemblMetazoa"/>
</dbReference>
<dbReference type="GO" id="GO:0046164">
    <property type="term" value="P:alcohol catabolic process"/>
    <property type="evidence" value="ECO:0007669"/>
    <property type="project" value="EnsemblMetazoa"/>
</dbReference>
<dbReference type="GO" id="GO:0048149">
    <property type="term" value="P:behavioral response to ethanol"/>
    <property type="evidence" value="ECO:0007669"/>
    <property type="project" value="EnsemblMetazoa"/>
</dbReference>
<dbReference type="GO" id="GO:0006734">
    <property type="term" value="P:NADH metabolic process"/>
    <property type="evidence" value="ECO:0007669"/>
    <property type="project" value="EnsemblMetazoa"/>
</dbReference>
<dbReference type="CDD" id="cd05323">
    <property type="entry name" value="ADH_SDR_c_like"/>
    <property type="match status" value="1"/>
</dbReference>
<dbReference type="FunFam" id="3.40.50.720:FF:000302">
    <property type="entry name" value="Alcohol dehydrogenase"/>
    <property type="match status" value="1"/>
</dbReference>
<dbReference type="Gene3D" id="3.40.50.720">
    <property type="entry name" value="NAD(P)-binding Rossmann-like Domain"/>
    <property type="match status" value="1"/>
</dbReference>
<dbReference type="InterPro" id="IPR002425">
    <property type="entry name" value="ADH_Drosophila-type"/>
</dbReference>
<dbReference type="InterPro" id="IPR036291">
    <property type="entry name" value="NAD(P)-bd_dom_sf"/>
</dbReference>
<dbReference type="InterPro" id="IPR020904">
    <property type="entry name" value="Sc_DH/Rdtase_CS"/>
</dbReference>
<dbReference type="InterPro" id="IPR002347">
    <property type="entry name" value="SDR_fam"/>
</dbReference>
<dbReference type="PANTHER" id="PTHR44229">
    <property type="entry name" value="15-HYDROXYPROSTAGLANDIN DEHYDROGENASE [NAD(+)]"/>
    <property type="match status" value="1"/>
</dbReference>
<dbReference type="PANTHER" id="PTHR44229:SF8">
    <property type="entry name" value="ALCOHOL DEHYDROGENASE-RELATED"/>
    <property type="match status" value="1"/>
</dbReference>
<dbReference type="Pfam" id="PF00106">
    <property type="entry name" value="adh_short"/>
    <property type="match status" value="1"/>
</dbReference>
<dbReference type="PRINTS" id="PR01168">
    <property type="entry name" value="ALCDHDRGNASE"/>
</dbReference>
<dbReference type="PRINTS" id="PR01167">
    <property type="entry name" value="INSADHFAMILY"/>
</dbReference>
<dbReference type="PRINTS" id="PR00080">
    <property type="entry name" value="SDRFAMILY"/>
</dbReference>
<dbReference type="SUPFAM" id="SSF51735">
    <property type="entry name" value="NAD(P)-binding Rossmann-fold domains"/>
    <property type="match status" value="1"/>
</dbReference>
<dbReference type="PROSITE" id="PS00061">
    <property type="entry name" value="ADH_SHORT"/>
    <property type="match status" value="1"/>
</dbReference>
<name>ADH_DROWI</name>
<sequence>MALTNKNIIFVAGLGGIGLDTSRELVKRDLKNLVILDRIDNPAAIAELKAINPKVTVTFYPYDVTTPLTETTKLLKTIFAQLKTVDVLINGAGILDDHQIERTIAVNFTGLVNTTTAILDFWDKRKGGPGGVICNIGSVTGFNAIYQVPVYSASKAAVVSFTQSIAKLANVTGVTAFTVNPGITKTTLVHKFNSWLDVETRVAEKLLEHPTQTTLACAQNFVKAIELNKNGAIWKLDLGTLEPIEWTKHWDSGI</sequence>
<feature type="chain" id="PRO_0000054500" description="Alcohol dehydrogenase">
    <location>
        <begin position="1"/>
        <end position="254"/>
    </location>
</feature>
<feature type="active site" description="Proton acceptor" evidence="2">
    <location>
        <position position="151"/>
    </location>
</feature>
<feature type="binding site" evidence="1">
    <location>
        <begin position="9"/>
        <end position="32"/>
    </location>
    <ligand>
        <name>NAD(+)</name>
        <dbReference type="ChEBI" id="CHEBI:57540"/>
    </ligand>
</feature>
<feature type="binding site" evidence="1">
    <location>
        <position position="138"/>
    </location>
    <ligand>
        <name>substrate</name>
    </ligand>
</feature>
<feature type="sequence variant" description="In strain: 0811.4." evidence="3 4">
    <original>V</original>
    <variation>I</variation>
    <location>
        <position position="57"/>
    </location>
</feature>
<feature type="sequence variant" description="In strain: 0811.0 and Lima." evidence="3 4">
    <original>T</original>
    <variation>A</variation>
    <location>
        <position position="77"/>
    </location>
</feature>
<feature type="sequence variant" description="In strain: Manaus I." evidence="3 4">
    <original>S</original>
    <variation>P</variation>
    <location>
        <position position="138"/>
    </location>
</feature>
<feature type="sequence variant" description="In strain: Manaus III." evidence="3 4">
    <original>S</original>
    <variation>P</variation>
    <location>
        <position position="194"/>
    </location>
</feature>
<feature type="sequence variant" description="In strain: Cano Mora and Atlixco." evidence="3 4">
    <original>T</original>
    <variation>A</variation>
    <location>
        <position position="213"/>
    </location>
</feature>
<feature type="sequence variant" description="In strain: A57." evidence="3 4">
    <original>I</original>
    <variation>T</variation>
    <location>
        <position position="225"/>
    </location>
</feature>
<feature type="sequence conflict" description="In Ref. 6; AAF72724." evidence="5" ref="6">
    <original>N</original>
    <variation>K</variation>
    <location>
        <position position="41"/>
    </location>
</feature>
<feature type="sequence conflict" description="In Ref. 6; AAF72724." evidence="5" ref="6">
    <original>K</original>
    <variation>N</variation>
    <location>
        <position position="73"/>
    </location>
</feature>
<comment type="catalytic activity">
    <reaction evidence="2">
        <text>a primary alcohol + NAD(+) = an aldehyde + NADH + H(+)</text>
        <dbReference type="Rhea" id="RHEA:10736"/>
        <dbReference type="ChEBI" id="CHEBI:15378"/>
        <dbReference type="ChEBI" id="CHEBI:15734"/>
        <dbReference type="ChEBI" id="CHEBI:17478"/>
        <dbReference type="ChEBI" id="CHEBI:57540"/>
        <dbReference type="ChEBI" id="CHEBI:57945"/>
        <dbReference type="EC" id="1.1.1.1"/>
    </reaction>
</comment>
<comment type="catalytic activity">
    <reaction evidence="2">
        <text>a secondary alcohol + NAD(+) = a ketone + NADH + H(+)</text>
        <dbReference type="Rhea" id="RHEA:10740"/>
        <dbReference type="ChEBI" id="CHEBI:15378"/>
        <dbReference type="ChEBI" id="CHEBI:17087"/>
        <dbReference type="ChEBI" id="CHEBI:35681"/>
        <dbReference type="ChEBI" id="CHEBI:57540"/>
        <dbReference type="ChEBI" id="CHEBI:57945"/>
        <dbReference type="EC" id="1.1.1.1"/>
    </reaction>
</comment>
<comment type="subunit">
    <text>Homodimer.</text>
</comment>
<comment type="similarity">
    <text evidence="5">Belongs to the short-chain dehydrogenases/reductases (SDR) family.</text>
</comment>
<keyword id="KW-0520">NAD</keyword>
<keyword id="KW-0560">Oxidoreductase</keyword>
<keyword id="KW-1185">Reference proteome</keyword>